<proteinExistence type="inferred from homology"/>
<comment type="function">
    <text evidence="1">Binds directly to 23S rRNA. The L1 stalk is quite mobile in the ribosome, and is involved in E site tRNA release.</text>
</comment>
<comment type="function">
    <text evidence="1">Protein L1 is also a translational repressor protein, it controls the translation of the L11 operon by binding to its mRNA.</text>
</comment>
<comment type="subunit">
    <text evidence="1">Part of the 50S ribosomal subunit.</text>
</comment>
<comment type="similarity">
    <text evidence="1">Belongs to the universal ribosomal protein uL1 family.</text>
</comment>
<evidence type="ECO:0000255" key="1">
    <source>
        <dbReference type="HAMAP-Rule" id="MF_01318"/>
    </source>
</evidence>
<evidence type="ECO:0000305" key="2"/>
<name>RL1_SALPA</name>
<gene>
    <name evidence="1" type="primary">rplA</name>
    <name type="ordered locus">SPA3988</name>
</gene>
<reference key="1">
    <citation type="journal article" date="2004" name="Nat. Genet.">
        <title>Comparison of genome degradation in Paratyphi A and Typhi, human-restricted serovars of Salmonella enterica that cause typhoid.</title>
        <authorList>
            <person name="McClelland M."/>
            <person name="Sanderson K.E."/>
            <person name="Clifton S.W."/>
            <person name="Latreille P."/>
            <person name="Porwollik S."/>
            <person name="Sabo A."/>
            <person name="Meyer R."/>
            <person name="Bieri T."/>
            <person name="Ozersky P."/>
            <person name="McLellan M."/>
            <person name="Harkins C.R."/>
            <person name="Wang C."/>
            <person name="Nguyen C."/>
            <person name="Berghoff A."/>
            <person name="Elliott G."/>
            <person name="Kohlberg S."/>
            <person name="Strong C."/>
            <person name="Du F."/>
            <person name="Carter J."/>
            <person name="Kremizki C."/>
            <person name="Layman D."/>
            <person name="Leonard S."/>
            <person name="Sun H."/>
            <person name="Fulton L."/>
            <person name="Nash W."/>
            <person name="Miner T."/>
            <person name="Minx P."/>
            <person name="Delehaunty K."/>
            <person name="Fronick C."/>
            <person name="Magrini V."/>
            <person name="Nhan M."/>
            <person name="Warren W."/>
            <person name="Florea L."/>
            <person name="Spieth J."/>
            <person name="Wilson R.K."/>
        </authorList>
    </citation>
    <scope>NUCLEOTIDE SEQUENCE [LARGE SCALE GENOMIC DNA]</scope>
    <source>
        <strain>ATCC 9150 / SARB42</strain>
    </source>
</reference>
<accession>Q5PK96</accession>
<dbReference type="EMBL" id="CP000026">
    <property type="protein sequence ID" value="AAV79740.1"/>
    <property type="molecule type" value="Genomic_DNA"/>
</dbReference>
<dbReference type="RefSeq" id="WP_001096676.1">
    <property type="nucleotide sequence ID" value="NC_006511.1"/>
</dbReference>
<dbReference type="SMR" id="Q5PK96"/>
<dbReference type="KEGG" id="spt:SPA3988"/>
<dbReference type="HOGENOM" id="CLU_062853_0_0_6"/>
<dbReference type="Proteomes" id="UP000008185">
    <property type="component" value="Chromosome"/>
</dbReference>
<dbReference type="GO" id="GO:0022625">
    <property type="term" value="C:cytosolic large ribosomal subunit"/>
    <property type="evidence" value="ECO:0007669"/>
    <property type="project" value="TreeGrafter"/>
</dbReference>
<dbReference type="GO" id="GO:0019843">
    <property type="term" value="F:rRNA binding"/>
    <property type="evidence" value="ECO:0007669"/>
    <property type="project" value="UniProtKB-UniRule"/>
</dbReference>
<dbReference type="GO" id="GO:0003735">
    <property type="term" value="F:structural constituent of ribosome"/>
    <property type="evidence" value="ECO:0007669"/>
    <property type="project" value="InterPro"/>
</dbReference>
<dbReference type="GO" id="GO:0000049">
    <property type="term" value="F:tRNA binding"/>
    <property type="evidence" value="ECO:0007669"/>
    <property type="project" value="UniProtKB-KW"/>
</dbReference>
<dbReference type="GO" id="GO:0006417">
    <property type="term" value="P:regulation of translation"/>
    <property type="evidence" value="ECO:0007669"/>
    <property type="project" value="UniProtKB-KW"/>
</dbReference>
<dbReference type="GO" id="GO:0006412">
    <property type="term" value="P:translation"/>
    <property type="evidence" value="ECO:0007669"/>
    <property type="project" value="UniProtKB-UniRule"/>
</dbReference>
<dbReference type="CDD" id="cd00403">
    <property type="entry name" value="Ribosomal_L1"/>
    <property type="match status" value="1"/>
</dbReference>
<dbReference type="FunFam" id="3.40.50.790:FF:000001">
    <property type="entry name" value="50S ribosomal protein L1"/>
    <property type="match status" value="1"/>
</dbReference>
<dbReference type="Gene3D" id="3.30.190.20">
    <property type="match status" value="1"/>
</dbReference>
<dbReference type="Gene3D" id="3.40.50.790">
    <property type="match status" value="1"/>
</dbReference>
<dbReference type="HAMAP" id="MF_01318_B">
    <property type="entry name" value="Ribosomal_uL1_B"/>
    <property type="match status" value="1"/>
</dbReference>
<dbReference type="InterPro" id="IPR005878">
    <property type="entry name" value="Ribosom_uL1_bac-type"/>
</dbReference>
<dbReference type="InterPro" id="IPR002143">
    <property type="entry name" value="Ribosomal_uL1"/>
</dbReference>
<dbReference type="InterPro" id="IPR023674">
    <property type="entry name" value="Ribosomal_uL1-like"/>
</dbReference>
<dbReference type="InterPro" id="IPR028364">
    <property type="entry name" value="Ribosomal_uL1/biogenesis"/>
</dbReference>
<dbReference type="InterPro" id="IPR016095">
    <property type="entry name" value="Ribosomal_uL1_3-a/b-sand"/>
</dbReference>
<dbReference type="InterPro" id="IPR023673">
    <property type="entry name" value="Ribosomal_uL1_CS"/>
</dbReference>
<dbReference type="NCBIfam" id="TIGR01169">
    <property type="entry name" value="rplA_bact"/>
    <property type="match status" value="1"/>
</dbReference>
<dbReference type="PANTHER" id="PTHR36427">
    <property type="entry name" value="54S RIBOSOMAL PROTEIN L1, MITOCHONDRIAL"/>
    <property type="match status" value="1"/>
</dbReference>
<dbReference type="PANTHER" id="PTHR36427:SF3">
    <property type="entry name" value="LARGE RIBOSOMAL SUBUNIT PROTEIN UL1M"/>
    <property type="match status" value="1"/>
</dbReference>
<dbReference type="Pfam" id="PF00687">
    <property type="entry name" value="Ribosomal_L1"/>
    <property type="match status" value="1"/>
</dbReference>
<dbReference type="PIRSF" id="PIRSF002155">
    <property type="entry name" value="Ribosomal_L1"/>
    <property type="match status" value="1"/>
</dbReference>
<dbReference type="SUPFAM" id="SSF56808">
    <property type="entry name" value="Ribosomal protein L1"/>
    <property type="match status" value="1"/>
</dbReference>
<dbReference type="PROSITE" id="PS01199">
    <property type="entry name" value="RIBOSOMAL_L1"/>
    <property type="match status" value="1"/>
</dbReference>
<feature type="chain" id="PRO_0000230636" description="Large ribosomal subunit protein uL1">
    <location>
        <begin position="1"/>
        <end position="234"/>
    </location>
</feature>
<protein>
    <recommendedName>
        <fullName evidence="1">Large ribosomal subunit protein uL1</fullName>
    </recommendedName>
    <alternativeName>
        <fullName evidence="2">50S ribosomal protein L1</fullName>
    </alternativeName>
</protein>
<organism>
    <name type="scientific">Salmonella paratyphi A (strain ATCC 9150 / SARB42)</name>
    <dbReference type="NCBI Taxonomy" id="295319"/>
    <lineage>
        <taxon>Bacteria</taxon>
        <taxon>Pseudomonadati</taxon>
        <taxon>Pseudomonadota</taxon>
        <taxon>Gammaproteobacteria</taxon>
        <taxon>Enterobacterales</taxon>
        <taxon>Enterobacteriaceae</taxon>
        <taxon>Salmonella</taxon>
    </lineage>
</organism>
<keyword id="KW-0678">Repressor</keyword>
<keyword id="KW-0687">Ribonucleoprotein</keyword>
<keyword id="KW-0689">Ribosomal protein</keyword>
<keyword id="KW-0694">RNA-binding</keyword>
<keyword id="KW-0699">rRNA-binding</keyword>
<keyword id="KW-0810">Translation regulation</keyword>
<keyword id="KW-0820">tRNA-binding</keyword>
<sequence length="234" mass="24729">MAKLTKRMRVIREKVDATKQYDINEAIALLKELATAKFNESVDVAVNLGIDARKSDQNVRGATVLPHGTGRSVRVAVFTQGPNAEAAKAAGAELVGMEDLADQIKKGEMNFDVVIASPDAMRVVGQLGQVLGPRGLMPNPKVGTVTPNVAEAVKNAKAGQVRYRNDKNGIIHTTIGKVDFDADKLKENLEALLVALKKAKPSQAKGVYIKKVSISTTMGAGVAVDQAGLSASAN</sequence>